<sequence>MGRIKKKGESGAAKNYITRTQAVRKLQISLPDFRKLCIWKGIYPREPRNKKKVSKSATASTTFYYTKDIQYLLHEPLLAKFRDQKVLEKKISRALGRGDVSDAKRLEGNAARPENTGKPSYTLDHVVRERYPTFVDALRDLDDCLSMLFLFANLPATSSVPAKMIARCERLCLEFQHYLIVSHSLQKSFLSIKGIYYQANIQGEDILWLVPYKFNQRVVGDIDFRIMGTFIEFYMTLLGFVNFRLYTSIGLKYPPKFDATKDDKAADLAAFTLEGAGLTSNGAQPDAIMEGTSESTPDPKLQAKVNKLVKELKSGEDEKPKAITNGEGESETPTDAIDKFEPAAPGGDVLLQPSYSTSDPSQLFANCTIYLSREAPRQALEFILRAFGCKRIGWDEVLGDGAFTTNELDPNITHQIVDRPPVTAVDNDEGEDNQTAQKVGGRVPGRIYVQPQWVWDSINDEELKEPNQYAPGAQLPPHLSPFVKARAGQYDPTVPLEEQQTEAEALKGDSDVEDEEEADGAEADEDDDEAVLAIENGEMDVAGSDDDDDEEDEEADAGFGGFSDAEVDDASEDDEQTSAALQRQIELEAELSGKSVKASEADKQAADPKSKAKQQKRKELQRKAKEEAEDLERAKGMLSKKKRKLFEQMTYSNNKKDAESEKLREKRRRIERKMAKGKAT</sequence>
<evidence type="ECO:0000255" key="1">
    <source>
        <dbReference type="HAMAP-Rule" id="MF_03028"/>
    </source>
</evidence>
<evidence type="ECO:0000256" key="2">
    <source>
        <dbReference type="SAM" id="MobiDB-lite"/>
    </source>
</evidence>
<feature type="chain" id="PRO_0000370495" description="Pescadillo homolog">
    <location>
        <begin position="1"/>
        <end position="680"/>
    </location>
</feature>
<feature type="domain" description="BRCT" evidence="1">
    <location>
        <begin position="359"/>
        <end position="471"/>
    </location>
</feature>
<feature type="region of interest" description="Disordered" evidence="2">
    <location>
        <begin position="315"/>
        <end position="336"/>
    </location>
</feature>
<feature type="region of interest" description="Disordered" evidence="2">
    <location>
        <begin position="494"/>
        <end position="680"/>
    </location>
</feature>
<feature type="coiled-coil region" evidence="1">
    <location>
        <begin position="609"/>
        <end position="680"/>
    </location>
</feature>
<feature type="compositionally biased region" description="Acidic residues" evidence="2">
    <location>
        <begin position="511"/>
        <end position="530"/>
    </location>
</feature>
<feature type="compositionally biased region" description="Acidic residues" evidence="2">
    <location>
        <begin position="543"/>
        <end position="556"/>
    </location>
</feature>
<feature type="compositionally biased region" description="Acidic residues" evidence="2">
    <location>
        <begin position="565"/>
        <end position="576"/>
    </location>
</feature>
<feature type="compositionally biased region" description="Basic and acidic residues" evidence="2">
    <location>
        <begin position="597"/>
        <end position="610"/>
    </location>
</feature>
<feature type="compositionally biased region" description="Basic and acidic residues" evidence="2">
    <location>
        <begin position="617"/>
        <end position="635"/>
    </location>
</feature>
<feature type="compositionally biased region" description="Basic and acidic residues" evidence="2">
    <location>
        <begin position="654"/>
        <end position="664"/>
    </location>
</feature>
<feature type="compositionally biased region" description="Basic residues" evidence="2">
    <location>
        <begin position="665"/>
        <end position="680"/>
    </location>
</feature>
<gene>
    <name evidence="1" type="primary">NOP7</name>
    <name type="ORF">MGG_01183</name>
</gene>
<reference key="1">
    <citation type="journal article" date="2005" name="Nature">
        <title>The genome sequence of the rice blast fungus Magnaporthe grisea.</title>
        <authorList>
            <person name="Dean R.A."/>
            <person name="Talbot N.J."/>
            <person name="Ebbole D.J."/>
            <person name="Farman M.L."/>
            <person name="Mitchell T.K."/>
            <person name="Orbach M.J."/>
            <person name="Thon M.R."/>
            <person name="Kulkarni R."/>
            <person name="Xu J.-R."/>
            <person name="Pan H."/>
            <person name="Read N.D."/>
            <person name="Lee Y.-H."/>
            <person name="Carbone I."/>
            <person name="Brown D."/>
            <person name="Oh Y.Y."/>
            <person name="Donofrio N."/>
            <person name="Jeong J.S."/>
            <person name="Soanes D.M."/>
            <person name="Djonovic S."/>
            <person name="Kolomiets E."/>
            <person name="Rehmeyer C."/>
            <person name="Li W."/>
            <person name="Harding M."/>
            <person name="Kim S."/>
            <person name="Lebrun M.-H."/>
            <person name="Bohnert H."/>
            <person name="Coughlan S."/>
            <person name="Butler J."/>
            <person name="Calvo S.E."/>
            <person name="Ma L.-J."/>
            <person name="Nicol R."/>
            <person name="Purcell S."/>
            <person name="Nusbaum C."/>
            <person name="Galagan J.E."/>
            <person name="Birren B.W."/>
        </authorList>
    </citation>
    <scope>NUCLEOTIDE SEQUENCE [LARGE SCALE GENOMIC DNA]</scope>
    <source>
        <strain>70-15 / ATCC MYA-4617 / FGSC 8958</strain>
    </source>
</reference>
<proteinExistence type="inferred from homology"/>
<protein>
    <recommendedName>
        <fullName evidence="1">Pescadillo homolog</fullName>
    </recommendedName>
    <alternativeName>
        <fullName evidence="1">Nucleolar protein 7 homolog</fullName>
    </alternativeName>
</protein>
<keyword id="KW-0175">Coiled coil</keyword>
<keyword id="KW-0539">Nucleus</keyword>
<keyword id="KW-1185">Reference proteome</keyword>
<keyword id="KW-0690">Ribosome biogenesis</keyword>
<keyword id="KW-0698">rRNA processing</keyword>
<dbReference type="EMBL" id="CM001232">
    <property type="protein sequence ID" value="EHA54260.1"/>
    <property type="molecule type" value="Genomic_DNA"/>
</dbReference>
<dbReference type="RefSeq" id="XP_003714067.1">
    <property type="nucleotide sequence ID" value="XM_003714019.1"/>
</dbReference>
<dbReference type="SMR" id="A4RLI4"/>
<dbReference type="FunCoup" id="A4RLI4">
    <property type="interactions" value="1252"/>
</dbReference>
<dbReference type="STRING" id="242507.A4RLI4"/>
<dbReference type="EnsemblFungi" id="MGG_01183T0">
    <property type="protein sequence ID" value="MGG_01183T0"/>
    <property type="gene ID" value="MGG_01183"/>
</dbReference>
<dbReference type="GeneID" id="2679784"/>
<dbReference type="KEGG" id="mgr:MGG_01183"/>
<dbReference type="VEuPathDB" id="FungiDB:MGG_01183"/>
<dbReference type="eggNOG" id="KOG2481">
    <property type="taxonomic scope" value="Eukaryota"/>
</dbReference>
<dbReference type="HOGENOM" id="CLU_019619_1_1_1"/>
<dbReference type="InParanoid" id="A4RLI4"/>
<dbReference type="OMA" id="QKVTWIV"/>
<dbReference type="OrthoDB" id="10264910at2759"/>
<dbReference type="Proteomes" id="UP000009058">
    <property type="component" value="Chromosome 2"/>
</dbReference>
<dbReference type="GO" id="GO:0005654">
    <property type="term" value="C:nucleoplasm"/>
    <property type="evidence" value="ECO:0007669"/>
    <property type="project" value="UniProtKB-SubCell"/>
</dbReference>
<dbReference type="GO" id="GO:0070545">
    <property type="term" value="C:PeBoW complex"/>
    <property type="evidence" value="ECO:0007669"/>
    <property type="project" value="TreeGrafter"/>
</dbReference>
<dbReference type="GO" id="GO:0030687">
    <property type="term" value="C:preribosome, large subunit precursor"/>
    <property type="evidence" value="ECO:0007669"/>
    <property type="project" value="UniProtKB-UniRule"/>
</dbReference>
<dbReference type="GO" id="GO:0043021">
    <property type="term" value="F:ribonucleoprotein complex binding"/>
    <property type="evidence" value="ECO:0007669"/>
    <property type="project" value="UniProtKB-UniRule"/>
</dbReference>
<dbReference type="GO" id="GO:0003723">
    <property type="term" value="F:RNA binding"/>
    <property type="evidence" value="ECO:0007669"/>
    <property type="project" value="TreeGrafter"/>
</dbReference>
<dbReference type="GO" id="GO:0000466">
    <property type="term" value="P:maturation of 5.8S rRNA from tricistronic rRNA transcript (SSU-rRNA, 5.8S rRNA, LSU-rRNA)"/>
    <property type="evidence" value="ECO:0007669"/>
    <property type="project" value="UniProtKB-UniRule"/>
</dbReference>
<dbReference type="GO" id="GO:0000463">
    <property type="term" value="P:maturation of LSU-rRNA from tricistronic rRNA transcript (SSU-rRNA, 5.8S rRNA, LSU-rRNA)"/>
    <property type="evidence" value="ECO:0007669"/>
    <property type="project" value="UniProtKB-UniRule"/>
</dbReference>
<dbReference type="CDD" id="cd17709">
    <property type="entry name" value="BRCT_pescadillo_like"/>
    <property type="match status" value="1"/>
</dbReference>
<dbReference type="Gene3D" id="3.40.50.10190">
    <property type="entry name" value="BRCT domain"/>
    <property type="match status" value="1"/>
</dbReference>
<dbReference type="HAMAP" id="MF_03028">
    <property type="entry name" value="Pescadillo"/>
    <property type="match status" value="1"/>
</dbReference>
<dbReference type="InterPro" id="IPR001357">
    <property type="entry name" value="BRCT_dom"/>
</dbReference>
<dbReference type="InterPro" id="IPR036420">
    <property type="entry name" value="BRCT_dom_sf"/>
</dbReference>
<dbReference type="InterPro" id="IPR010613">
    <property type="entry name" value="PES"/>
</dbReference>
<dbReference type="PANTHER" id="PTHR12221">
    <property type="entry name" value="PESCADILLO - RELATED"/>
    <property type="match status" value="1"/>
</dbReference>
<dbReference type="PANTHER" id="PTHR12221:SF6">
    <property type="entry name" value="PESCADILLO HOMOLOG"/>
    <property type="match status" value="1"/>
</dbReference>
<dbReference type="Pfam" id="PF00533">
    <property type="entry name" value="BRCT"/>
    <property type="match status" value="1"/>
</dbReference>
<dbReference type="Pfam" id="PF06732">
    <property type="entry name" value="Pescadillo_N"/>
    <property type="match status" value="1"/>
</dbReference>
<dbReference type="SMART" id="SM00292">
    <property type="entry name" value="BRCT"/>
    <property type="match status" value="1"/>
</dbReference>
<dbReference type="SUPFAM" id="SSF52113">
    <property type="entry name" value="BRCT domain"/>
    <property type="match status" value="1"/>
</dbReference>
<dbReference type="PROSITE" id="PS50172">
    <property type="entry name" value="BRCT"/>
    <property type="match status" value="1"/>
</dbReference>
<organism>
    <name type="scientific">Pyricularia oryzae (strain 70-15 / ATCC MYA-4617 / FGSC 8958)</name>
    <name type="common">Rice blast fungus</name>
    <name type="synonym">Magnaporthe oryzae</name>
    <dbReference type="NCBI Taxonomy" id="242507"/>
    <lineage>
        <taxon>Eukaryota</taxon>
        <taxon>Fungi</taxon>
        <taxon>Dikarya</taxon>
        <taxon>Ascomycota</taxon>
        <taxon>Pezizomycotina</taxon>
        <taxon>Sordariomycetes</taxon>
        <taxon>Sordariomycetidae</taxon>
        <taxon>Magnaporthales</taxon>
        <taxon>Pyriculariaceae</taxon>
        <taxon>Pyricularia</taxon>
    </lineage>
</organism>
<comment type="function">
    <text evidence="1">Component of the NOP7 complex, which is required for maturation of the 25S and 5.8S ribosomal RNAs and formation of the 60S ribosome.</text>
</comment>
<comment type="subunit">
    <text evidence="1">Component of the NOP7 complex, composed of ERB1, NOP7 and YTM1. The complex is held together by ERB1, which interacts with NOP7 via its N-terminal domain and with YTM1 via a high-affinity interaction between the seven-bladed beta-propeller domains of the 2 proteins. The NOP7 complex associates with the 66S pre-ribosome.</text>
</comment>
<comment type="subcellular location">
    <subcellularLocation>
        <location evidence="1">Nucleus</location>
        <location evidence="1">Nucleolus</location>
    </subcellularLocation>
    <subcellularLocation>
        <location evidence="1">Nucleus</location>
        <location evidence="1">Nucleoplasm</location>
    </subcellularLocation>
</comment>
<comment type="similarity">
    <text evidence="1">Belongs to the pescadillo family.</text>
</comment>
<name>PESC_PYRO7</name>
<accession>A4RLI4</accession>
<accession>G4MWW8</accession>